<accession>P00081</accession>
<feature type="chain" id="PRO_0000108339" description="Cytochrome c2">
    <location>
        <begin position="1"/>
        <end position="111"/>
    </location>
</feature>
<feature type="binding site" description="covalent" evidence="1">
    <location>
        <position position="14"/>
    </location>
    <ligand>
        <name>heme c</name>
        <dbReference type="ChEBI" id="CHEBI:61717"/>
    </ligand>
</feature>
<feature type="binding site" description="covalent" evidence="1">
    <location>
        <position position="17"/>
    </location>
    <ligand>
        <name>heme c</name>
        <dbReference type="ChEBI" id="CHEBI:61717"/>
    </ligand>
</feature>
<feature type="binding site" description="axial binding residue" evidence="1">
    <location>
        <position position="18"/>
    </location>
    <ligand>
        <name>heme c</name>
        <dbReference type="ChEBI" id="CHEBI:61717"/>
    </ligand>
    <ligandPart>
        <name>Fe</name>
        <dbReference type="ChEBI" id="CHEBI:18248"/>
    </ligandPart>
</feature>
<feature type="binding site" description="axial binding residue" evidence="1">
    <location>
        <position position="83"/>
    </location>
    <ligand>
        <name>heme c</name>
        <dbReference type="ChEBI" id="CHEBI:61717"/>
    </ligand>
    <ligandPart>
        <name>Fe</name>
        <dbReference type="ChEBI" id="CHEBI:18248"/>
    </ligandPart>
</feature>
<protein>
    <recommendedName>
        <fullName>Cytochrome c2</fullName>
    </recommendedName>
</protein>
<name>CYC2_AGRTC</name>
<keyword id="KW-0903">Direct protein sequencing</keyword>
<keyword id="KW-0249">Electron transport</keyword>
<keyword id="KW-0349">Heme</keyword>
<keyword id="KW-0408">Iron</keyword>
<keyword id="KW-0479">Metal-binding</keyword>
<keyword id="KW-0813">Transport</keyword>
<reference key="1">
    <citation type="book" date="1980" name="Protides of the biological fluids, Proc. 28th colloquium">
        <title>Cytochromes c of two different sequence classes in Agrobacterium tumefaciens.</title>
        <editorList>
            <person name="Peeters H."/>
        </editorList>
        <authorList>
            <person name="van Beeumen J."/>
            <person name="Tempst P."/>
            <person name="Stevens P."/>
            <person name="Bral D."/>
            <person name="van Damme J."/>
            <person name="de Ley J."/>
        </authorList>
    </citation>
    <scope>PROTEIN SEQUENCE</scope>
</reference>
<sequence length="111" mass="11648">EGDVAKGEAAFKRCSACHAIGEGAKNKVGPQLNGIIGRTAGGDPDYNYSNAMKKAGGEGLVWTPQELRDFLSAPKKKIPGNKMALAGISKPEELDNLIAYLIFSASSKPAZ</sequence>
<comment type="function">
    <text>Cytochrome c2 is found mainly in purple, non-sulfur, photosynthetic bacteria where it functions as the electron donor to the oxidized bacteriochlorophyll in the photophosphorylation pathway. However, it may also have a role in the respiratory chain and is found in some non-photosynthetic bacteria.</text>
</comment>
<comment type="PTM">
    <text evidence="1">Binds 1 heme c group covalently per subunit.</text>
</comment>
<comment type="similarity">
    <text evidence="2">Belongs to the cytochrome c family.</text>
</comment>
<organism>
    <name type="scientific">Agrobacterium tumefaciens (strain II Chrys)</name>
    <dbReference type="NCBI Taxonomy" id="372"/>
    <lineage>
        <taxon>Bacteria</taxon>
        <taxon>Pseudomonadati</taxon>
        <taxon>Pseudomonadota</taxon>
        <taxon>Alphaproteobacteria</taxon>
        <taxon>Hyphomicrobiales</taxon>
        <taxon>Rhizobiaceae</taxon>
        <taxon>Rhizobium/Agrobacterium group</taxon>
        <taxon>Agrobacterium</taxon>
        <taxon>Agrobacterium tumefaciens complex</taxon>
    </lineage>
</organism>
<dbReference type="PIR" id="A00073">
    <property type="entry name" value="CCAG2"/>
</dbReference>
<dbReference type="GO" id="GO:0009055">
    <property type="term" value="F:electron transfer activity"/>
    <property type="evidence" value="ECO:0007669"/>
    <property type="project" value="InterPro"/>
</dbReference>
<dbReference type="GO" id="GO:0020037">
    <property type="term" value="F:heme binding"/>
    <property type="evidence" value="ECO:0007669"/>
    <property type="project" value="InterPro"/>
</dbReference>
<dbReference type="GO" id="GO:0046872">
    <property type="term" value="F:metal ion binding"/>
    <property type="evidence" value="ECO:0007669"/>
    <property type="project" value="UniProtKB-KW"/>
</dbReference>
<dbReference type="Gene3D" id="1.10.760.10">
    <property type="entry name" value="Cytochrome c-like domain"/>
    <property type="match status" value="1"/>
</dbReference>
<dbReference type="InterPro" id="IPR009056">
    <property type="entry name" value="Cyt_c-like_dom"/>
</dbReference>
<dbReference type="InterPro" id="IPR036909">
    <property type="entry name" value="Cyt_c-like_dom_sf"/>
</dbReference>
<dbReference type="InterPro" id="IPR002327">
    <property type="entry name" value="Cyt_c_1A/1B"/>
</dbReference>
<dbReference type="PANTHER" id="PTHR11961">
    <property type="entry name" value="CYTOCHROME C"/>
    <property type="match status" value="1"/>
</dbReference>
<dbReference type="Pfam" id="PF00034">
    <property type="entry name" value="Cytochrom_C"/>
    <property type="match status" value="1"/>
</dbReference>
<dbReference type="PRINTS" id="PR00604">
    <property type="entry name" value="CYTCHRMECIAB"/>
</dbReference>
<dbReference type="SUPFAM" id="SSF46626">
    <property type="entry name" value="Cytochrome c"/>
    <property type="match status" value="1"/>
</dbReference>
<dbReference type="PROSITE" id="PS51007">
    <property type="entry name" value="CYTC"/>
    <property type="match status" value="1"/>
</dbReference>
<evidence type="ECO:0000250" key="1">
    <source>
        <dbReference type="UniProtKB" id="P00083"/>
    </source>
</evidence>
<evidence type="ECO:0000305" key="2"/>
<proteinExistence type="evidence at protein level"/>